<name>K6PF_PYRHO</name>
<organism>
    <name type="scientific">Pyrococcus horikoshii (strain ATCC 700860 / DSM 12428 / JCM 9974 / NBRC 100139 / OT-3)</name>
    <dbReference type="NCBI Taxonomy" id="70601"/>
    <lineage>
        <taxon>Archaea</taxon>
        <taxon>Methanobacteriati</taxon>
        <taxon>Methanobacteriota</taxon>
        <taxon>Thermococci</taxon>
        <taxon>Thermococcales</taxon>
        <taxon>Thermococcaceae</taxon>
        <taxon>Pyrococcus</taxon>
    </lineage>
</organism>
<comment type="function">
    <text evidence="1">Catalyzes the phosphorylation of fructose 6-phosphate to fructose 1,6-bisphosphate using ADP as the phosphate donor.</text>
</comment>
<comment type="catalytic activity">
    <reaction evidence="1">
        <text>beta-D-fructose 6-phosphate + ADP = beta-D-fructose 1,6-bisphosphate + AMP + H(+)</text>
        <dbReference type="Rhea" id="RHEA:20105"/>
        <dbReference type="ChEBI" id="CHEBI:15378"/>
        <dbReference type="ChEBI" id="CHEBI:32966"/>
        <dbReference type="ChEBI" id="CHEBI:57634"/>
        <dbReference type="ChEBI" id="CHEBI:456215"/>
        <dbReference type="ChEBI" id="CHEBI:456216"/>
        <dbReference type="EC" id="2.7.1.146"/>
    </reaction>
</comment>
<comment type="cofactor">
    <cofactor evidence="1">
        <name>Mg(2+)</name>
        <dbReference type="ChEBI" id="CHEBI:18420"/>
    </cofactor>
    <text evidence="1">Binds 1 Mg(2+) ion per subunit.</text>
</comment>
<comment type="pathway">
    <text evidence="1">Carbohydrate degradation; glycolysis.</text>
</comment>
<comment type="subcellular location">
    <subcellularLocation>
        <location evidence="1">Cytoplasm</location>
    </subcellularLocation>
</comment>
<comment type="similarity">
    <text evidence="1">Belongs to the carbohydrate kinase PfkC family.</text>
</comment>
<accession>O59355</accession>
<reference key="1">
    <citation type="journal article" date="1998" name="DNA Res.">
        <title>Complete sequence and gene organization of the genome of a hyper-thermophilic archaebacterium, Pyrococcus horikoshii OT3.</title>
        <authorList>
            <person name="Kawarabayasi Y."/>
            <person name="Sawada M."/>
            <person name="Horikawa H."/>
            <person name="Haikawa Y."/>
            <person name="Hino Y."/>
            <person name="Yamamoto S."/>
            <person name="Sekine M."/>
            <person name="Baba S."/>
            <person name="Kosugi H."/>
            <person name="Hosoyama A."/>
            <person name="Nagai Y."/>
            <person name="Sakai M."/>
            <person name="Ogura K."/>
            <person name="Otsuka R."/>
            <person name="Nakazawa H."/>
            <person name="Takamiya M."/>
            <person name="Ohfuku Y."/>
            <person name="Funahashi T."/>
            <person name="Tanaka T."/>
            <person name="Kudoh Y."/>
            <person name="Yamazaki J."/>
            <person name="Kushida N."/>
            <person name="Oguchi A."/>
            <person name="Aoki K."/>
            <person name="Yoshizawa T."/>
            <person name="Nakamura Y."/>
            <person name="Robb F.T."/>
            <person name="Horikoshi K."/>
            <person name="Masuchi Y."/>
            <person name="Shizuya H."/>
            <person name="Kikuchi H."/>
        </authorList>
    </citation>
    <scope>NUCLEOTIDE SEQUENCE [LARGE SCALE GENOMIC DNA]</scope>
    <source>
        <strain>ATCC 700860 / DSM 12428 / JCM 9974 / NBRC 100139 / OT-3</strain>
    </source>
</reference>
<keyword id="KW-0002">3D-structure</keyword>
<keyword id="KW-0963">Cytoplasm</keyword>
<keyword id="KW-0324">Glycolysis</keyword>
<keyword id="KW-0418">Kinase</keyword>
<keyword id="KW-0460">Magnesium</keyword>
<keyword id="KW-0479">Metal-binding</keyword>
<keyword id="KW-0808">Transferase</keyword>
<gene>
    <name evidence="1" type="primary">pfkC</name>
    <name type="ordered locus">PH1645</name>
</gene>
<proteinExistence type="evidence at protein level"/>
<feature type="chain" id="PRO_0000184767" description="ADP-specific phosphofructokinase">
    <location>
        <begin position="1"/>
        <end position="450"/>
    </location>
</feature>
<feature type="domain" description="ADPK" evidence="1">
    <location>
        <begin position="1"/>
        <end position="449"/>
    </location>
</feature>
<feature type="active site" description="Proton acceptor" evidence="1">
    <location>
        <position position="433"/>
    </location>
</feature>
<feature type="binding site" evidence="1">
    <location>
        <position position="260"/>
    </location>
    <ligand>
        <name>Mg(2+)</name>
        <dbReference type="ChEBI" id="CHEBI:18420"/>
    </ligand>
</feature>
<feature type="binding site" evidence="1">
    <location>
        <position position="290"/>
    </location>
    <ligand>
        <name>Mg(2+)</name>
        <dbReference type="ChEBI" id="CHEBI:18420"/>
    </ligand>
</feature>
<feature type="binding site" evidence="1">
    <location>
        <position position="433"/>
    </location>
    <ligand>
        <name>Mg(2+)</name>
        <dbReference type="ChEBI" id="CHEBI:18420"/>
    </ligand>
</feature>
<feature type="strand" evidence="2">
    <location>
        <begin position="7"/>
        <end position="12"/>
    </location>
</feature>
<feature type="strand" evidence="2">
    <location>
        <begin position="15"/>
        <end position="21"/>
    </location>
</feature>
<feature type="helix" evidence="2">
    <location>
        <begin position="24"/>
        <end position="32"/>
    </location>
</feature>
<feature type="helix" evidence="2">
    <location>
        <begin position="36"/>
        <end position="45"/>
    </location>
</feature>
<feature type="strand" evidence="2">
    <location>
        <begin position="48"/>
        <end position="52"/>
    </location>
</feature>
<feature type="helix" evidence="2">
    <location>
        <begin position="53"/>
        <end position="66"/>
    </location>
</feature>
<feature type="strand" evidence="2">
    <location>
        <begin position="70"/>
        <end position="74"/>
    </location>
</feature>
<feature type="helix" evidence="2">
    <location>
        <begin position="79"/>
        <end position="86"/>
    </location>
</feature>
<feature type="strand" evidence="2">
    <location>
        <begin position="90"/>
        <end position="96"/>
    </location>
</feature>
<feature type="helix" evidence="2">
    <location>
        <begin position="97"/>
        <end position="107"/>
    </location>
</feature>
<feature type="strand" evidence="2">
    <location>
        <begin position="111"/>
        <end position="115"/>
    </location>
</feature>
<feature type="helix" evidence="2">
    <location>
        <begin position="122"/>
        <end position="125"/>
    </location>
</feature>
<feature type="strand" evidence="2">
    <location>
        <begin position="132"/>
        <end position="146"/>
    </location>
</feature>
<feature type="helix" evidence="2">
    <location>
        <begin position="147"/>
        <end position="149"/>
    </location>
</feature>
<feature type="strand" evidence="2">
    <location>
        <begin position="159"/>
        <end position="165"/>
    </location>
</feature>
<feature type="strand" evidence="2">
    <location>
        <begin position="170"/>
        <end position="175"/>
    </location>
</feature>
<feature type="strand" evidence="2">
    <location>
        <begin position="177"/>
        <end position="179"/>
    </location>
</feature>
<feature type="strand" evidence="2">
    <location>
        <begin position="184"/>
        <end position="190"/>
    </location>
</feature>
<feature type="helix" evidence="2">
    <location>
        <begin position="194"/>
        <end position="196"/>
    </location>
</feature>
<feature type="turn" evidence="2">
    <location>
        <begin position="202"/>
        <end position="204"/>
    </location>
</feature>
<feature type="helix" evidence="2">
    <location>
        <begin position="205"/>
        <end position="207"/>
    </location>
</feature>
<feature type="helix" evidence="2">
    <location>
        <begin position="208"/>
        <end position="214"/>
    </location>
</feature>
<feature type="strand" evidence="2">
    <location>
        <begin position="216"/>
        <end position="220"/>
    </location>
</feature>
<feature type="helix" evidence="2">
    <location>
        <begin position="223"/>
        <end position="225"/>
    </location>
</feature>
<feature type="helix" evidence="2">
    <location>
        <begin position="236"/>
        <end position="252"/>
    </location>
</feature>
<feature type="strand" evidence="2">
    <location>
        <begin position="256"/>
        <end position="260"/>
    </location>
</feature>
<feature type="helix" evidence="2">
    <location>
        <begin position="267"/>
        <end position="276"/>
    </location>
</feature>
<feature type="helix" evidence="2">
    <location>
        <begin position="278"/>
        <end position="280"/>
    </location>
</feature>
<feature type="strand" evidence="2">
    <location>
        <begin position="281"/>
        <end position="287"/>
    </location>
</feature>
<feature type="helix" evidence="2">
    <location>
        <begin position="288"/>
        <end position="298"/>
    </location>
</feature>
<feature type="helix" evidence="2">
    <location>
        <begin position="301"/>
        <end position="310"/>
    </location>
</feature>
<feature type="helix" evidence="2">
    <location>
        <begin position="313"/>
        <end position="327"/>
    </location>
</feature>
<feature type="strand" evidence="2">
    <location>
        <begin position="330"/>
        <end position="335"/>
    </location>
</feature>
<feature type="strand" evidence="2">
    <location>
        <begin position="337"/>
        <end position="345"/>
    </location>
</feature>
<feature type="helix" evidence="2">
    <location>
        <begin position="352"/>
        <end position="372"/>
    </location>
</feature>
<feature type="helix" evidence="2">
    <location>
        <begin position="378"/>
        <end position="380"/>
    </location>
</feature>
<feature type="helix" evidence="2">
    <location>
        <begin position="381"/>
        <end position="385"/>
    </location>
</feature>
<feature type="helix" evidence="2">
    <location>
        <begin position="393"/>
        <end position="406"/>
    </location>
</feature>
<feature type="strand" evidence="2">
    <location>
        <begin position="412"/>
        <end position="418"/>
    </location>
</feature>
<feature type="helix" evidence="2">
    <location>
        <begin position="431"/>
        <end position="447"/>
    </location>
</feature>
<dbReference type="EC" id="2.7.1.146" evidence="1"/>
<dbReference type="EMBL" id="BA000001">
    <property type="protein sequence ID" value="BAA30757.1"/>
    <property type="molecule type" value="Genomic_DNA"/>
</dbReference>
<dbReference type="PIR" id="E71044">
    <property type="entry name" value="E71044"/>
</dbReference>
<dbReference type="RefSeq" id="WP_010885713.1">
    <property type="nucleotide sequence ID" value="NC_000961.1"/>
</dbReference>
<dbReference type="PDB" id="1U2X">
    <property type="method" value="X-ray"/>
    <property type="resolution" value="2.00 A"/>
    <property type="chains" value="A/B=1-450"/>
</dbReference>
<dbReference type="PDB" id="3DRW">
    <property type="method" value="X-ray"/>
    <property type="resolution" value="1.90 A"/>
    <property type="chains" value="A/B=1-450"/>
</dbReference>
<dbReference type="PDBsum" id="1U2X"/>
<dbReference type="PDBsum" id="3DRW"/>
<dbReference type="SMR" id="O59355"/>
<dbReference type="IntAct" id="O59355">
    <property type="interactions" value="1"/>
</dbReference>
<dbReference type="MINT" id="O59355"/>
<dbReference type="STRING" id="70601.gene:9378638"/>
<dbReference type="EnsemblBacteria" id="BAA30757">
    <property type="protein sequence ID" value="BAA30757"/>
    <property type="gene ID" value="BAA30757"/>
</dbReference>
<dbReference type="GeneID" id="1442494"/>
<dbReference type="KEGG" id="pho:PH1645"/>
<dbReference type="eggNOG" id="arCOG03370">
    <property type="taxonomic scope" value="Archaea"/>
</dbReference>
<dbReference type="OrthoDB" id="85200at2157"/>
<dbReference type="BRENDA" id="2.7.1.146">
    <property type="organism ID" value="5244"/>
</dbReference>
<dbReference type="UniPathway" id="UPA00109"/>
<dbReference type="EvolutionaryTrace" id="O59355"/>
<dbReference type="Proteomes" id="UP000000752">
    <property type="component" value="Chromosome"/>
</dbReference>
<dbReference type="GO" id="GO:0005737">
    <property type="term" value="C:cytoplasm"/>
    <property type="evidence" value="ECO:0007669"/>
    <property type="project" value="UniProtKB-SubCell"/>
</dbReference>
<dbReference type="GO" id="GO:0043844">
    <property type="term" value="F:ADP-specific phosphofructokinase activity"/>
    <property type="evidence" value="ECO:0007669"/>
    <property type="project" value="UniProtKB-EC"/>
</dbReference>
<dbReference type="GO" id="GO:0000287">
    <property type="term" value="F:magnesium ion binding"/>
    <property type="evidence" value="ECO:0007669"/>
    <property type="project" value="InterPro"/>
</dbReference>
<dbReference type="GO" id="GO:0008443">
    <property type="term" value="F:phosphofructokinase activity"/>
    <property type="evidence" value="ECO:0007669"/>
    <property type="project" value="InterPro"/>
</dbReference>
<dbReference type="GO" id="GO:0006000">
    <property type="term" value="P:fructose metabolic process"/>
    <property type="evidence" value="ECO:0007669"/>
    <property type="project" value="InterPro"/>
</dbReference>
<dbReference type="GO" id="GO:0006096">
    <property type="term" value="P:glycolytic process"/>
    <property type="evidence" value="ECO:0007669"/>
    <property type="project" value="UniProtKB-UniRule"/>
</dbReference>
<dbReference type="Gene3D" id="3.30.1110.20">
    <property type="match status" value="1"/>
</dbReference>
<dbReference type="Gene3D" id="3.40.1190.20">
    <property type="match status" value="1"/>
</dbReference>
<dbReference type="HAMAP" id="MF_00561">
    <property type="entry name" value="ADP_PFKinase"/>
    <property type="match status" value="1"/>
</dbReference>
<dbReference type="InterPro" id="IPR007666">
    <property type="entry name" value="ADP_PFK/GK"/>
</dbReference>
<dbReference type="InterPro" id="IPR015990">
    <property type="entry name" value="ADP_PFK/GK_arc"/>
</dbReference>
<dbReference type="InterPro" id="IPR011790">
    <property type="entry name" value="ADP_PFK_arc"/>
</dbReference>
<dbReference type="InterPro" id="IPR029056">
    <property type="entry name" value="Ribokinase-like"/>
</dbReference>
<dbReference type="NCBIfam" id="TIGR02045">
    <property type="entry name" value="P_fruct_ADP"/>
    <property type="match status" value="1"/>
</dbReference>
<dbReference type="PANTHER" id="PTHR21208">
    <property type="entry name" value="ADP-DEPENDENT GLUCOKINASE"/>
    <property type="match status" value="1"/>
</dbReference>
<dbReference type="PANTHER" id="PTHR21208:SF1">
    <property type="entry name" value="ADP-DEPENDENT GLUCOKINASE"/>
    <property type="match status" value="1"/>
</dbReference>
<dbReference type="Pfam" id="PF04587">
    <property type="entry name" value="ADP_PFK_GK"/>
    <property type="match status" value="1"/>
</dbReference>
<dbReference type="PIRSF" id="PIRSF015883">
    <property type="entry name" value="ADP-Pfk_glckin"/>
    <property type="match status" value="1"/>
</dbReference>
<dbReference type="SUPFAM" id="SSF53613">
    <property type="entry name" value="Ribokinase-like"/>
    <property type="match status" value="1"/>
</dbReference>
<dbReference type="PROSITE" id="PS51255">
    <property type="entry name" value="ADPK"/>
    <property type="match status" value="1"/>
</dbReference>
<evidence type="ECO:0000255" key="1">
    <source>
        <dbReference type="HAMAP-Rule" id="MF_00561"/>
    </source>
</evidence>
<evidence type="ECO:0007829" key="2">
    <source>
        <dbReference type="PDB" id="3DRW"/>
    </source>
</evidence>
<protein>
    <recommendedName>
        <fullName evidence="1">ADP-specific phosphofructokinase</fullName>
        <ecNumber evidence="1">2.7.1.146</ecNumber>
    </recommendedName>
    <alternativeName>
        <fullName evidence="1">ADP-dependent phosphofructokinase</fullName>
        <shortName evidence="1">ADP-Pfk</shortName>
    </alternativeName>
</protein>
<sequence>MIPEHLSIYTAYNANIDAIVKLNQETIQNLINAFDPDEVKRRIEEYPREINEPIDFVARLVHTLKLGKPAAVPLVNEKMNEWFDKTFRYEEERLGGQAGIIANTLAGLKIRKVIAYTPFLPKRLAELFKKGVLYPVVENGELQFKPIQEAYREGDPLKINRIFEFRKGLKFKLGDETIEIPNSGRFIVSARFESISRIETREDIKPFLGEIGKEVDGAIFSGYQGLRTKYSDGKDANYYLRRAKEDIIEFKEKDVKIHVEFASVQDRKLRKKIITNILPFVDSVGIDEAEIAQILSVLGYRELADRIFTYNRLEDSILGGMIILDELNFEILQVHTTYYLMYITHRDNPLSEEELAKSLEFGTTLAAARASLGDIRGPDDYKVGLKVPFNERSEYVKLRFEEAKSRLRMREYKVVVIPTRLVQNPVLTVGLGDTISAGAFLTYLEFLKRH</sequence>